<comment type="similarity">
    <text evidence="1">Belongs to the eukaryotic ribosomal protein eL21 family.</text>
</comment>
<protein>
    <recommendedName>
        <fullName evidence="1">Large ribosomal subunit protein eL21</fullName>
    </recommendedName>
    <alternativeName>
        <fullName evidence="2">50S ribosomal protein L21e</fullName>
    </alternativeName>
</protein>
<proteinExistence type="inferred from homology"/>
<keyword id="KW-1185">Reference proteome</keyword>
<keyword id="KW-0687">Ribonucleoprotein</keyword>
<keyword id="KW-0689">Ribosomal protein</keyword>
<accession>B1L7A8</accession>
<sequence length="98" mass="11181">MGRRSFGFLYRSRDFLSKTPRERGRPSPAKLLKEFEVGDKVVIDVEPSIRRGMPHRRYQGKVGVVMGRRGEAYLVDIKLGGKTKHLIVLPVHLKKHSG</sequence>
<gene>
    <name evidence="1" type="primary">rpl21e</name>
    <name type="ordered locus">Kcr_1592</name>
</gene>
<evidence type="ECO:0000255" key="1">
    <source>
        <dbReference type="HAMAP-Rule" id="MF_00369"/>
    </source>
</evidence>
<evidence type="ECO:0000305" key="2"/>
<reference key="1">
    <citation type="journal article" date="2008" name="Proc. Natl. Acad. Sci. U.S.A.">
        <title>A korarchaeal genome reveals new insights into the evolution of the Archaea.</title>
        <authorList>
            <person name="Elkins J.G."/>
            <person name="Podar M."/>
            <person name="Graham D.E."/>
            <person name="Makarova K.S."/>
            <person name="Wolf Y."/>
            <person name="Randau L."/>
            <person name="Hedlund B.P."/>
            <person name="Brochier-Armanet C."/>
            <person name="Kunin V."/>
            <person name="Anderson I."/>
            <person name="Lapidus A."/>
            <person name="Goltsman E."/>
            <person name="Barry K."/>
            <person name="Koonin E.V."/>
            <person name="Hugenholtz P."/>
            <person name="Kyrpides N."/>
            <person name="Wanner G."/>
            <person name="Richardson P."/>
            <person name="Keller M."/>
            <person name="Stetter K.O."/>
        </authorList>
    </citation>
    <scope>NUCLEOTIDE SEQUENCE [LARGE SCALE GENOMIC DNA]</scope>
    <source>
        <strain>OPF8</strain>
    </source>
</reference>
<dbReference type="EMBL" id="CP000968">
    <property type="protein sequence ID" value="ACB08337.1"/>
    <property type="molecule type" value="Genomic_DNA"/>
</dbReference>
<dbReference type="RefSeq" id="WP_012310234.1">
    <property type="nucleotide sequence ID" value="NC_010482.1"/>
</dbReference>
<dbReference type="SMR" id="B1L7A8"/>
<dbReference type="FunCoup" id="B1L7A8">
    <property type="interactions" value="173"/>
</dbReference>
<dbReference type="STRING" id="374847.Kcr_1592"/>
<dbReference type="EnsemblBacteria" id="ACB08337">
    <property type="protein sequence ID" value="ACB08337"/>
    <property type="gene ID" value="Kcr_1592"/>
</dbReference>
<dbReference type="GeneID" id="6094868"/>
<dbReference type="KEGG" id="kcr:Kcr_1592"/>
<dbReference type="eggNOG" id="arCOG04129">
    <property type="taxonomic scope" value="Archaea"/>
</dbReference>
<dbReference type="HOGENOM" id="CLU_103610_1_1_2"/>
<dbReference type="InParanoid" id="B1L7A8"/>
<dbReference type="OrthoDB" id="6295at2157"/>
<dbReference type="PhylomeDB" id="B1L7A8"/>
<dbReference type="Proteomes" id="UP000001686">
    <property type="component" value="Chromosome"/>
</dbReference>
<dbReference type="GO" id="GO:0022625">
    <property type="term" value="C:cytosolic large ribosomal subunit"/>
    <property type="evidence" value="ECO:0000318"/>
    <property type="project" value="GO_Central"/>
</dbReference>
<dbReference type="GO" id="GO:0003735">
    <property type="term" value="F:structural constituent of ribosome"/>
    <property type="evidence" value="ECO:0000318"/>
    <property type="project" value="GO_Central"/>
</dbReference>
<dbReference type="GO" id="GO:0006412">
    <property type="term" value="P:translation"/>
    <property type="evidence" value="ECO:0007669"/>
    <property type="project" value="UniProtKB-UniRule"/>
</dbReference>
<dbReference type="FunFam" id="2.30.30.70:FF:000001">
    <property type="entry name" value="60S ribosomal protein L21"/>
    <property type="match status" value="1"/>
</dbReference>
<dbReference type="Gene3D" id="2.30.30.70">
    <property type="entry name" value="Ribosomal protein L21"/>
    <property type="match status" value="1"/>
</dbReference>
<dbReference type="HAMAP" id="MF_00369">
    <property type="entry name" value="Ribosomal_eL21"/>
    <property type="match status" value="1"/>
</dbReference>
<dbReference type="InterPro" id="IPR001147">
    <property type="entry name" value="Ribosomal_eL21"/>
</dbReference>
<dbReference type="InterPro" id="IPR022856">
    <property type="entry name" value="Ribosomal_eL21_arc"/>
</dbReference>
<dbReference type="InterPro" id="IPR018259">
    <property type="entry name" value="Ribosomal_eL21_CS"/>
</dbReference>
<dbReference type="InterPro" id="IPR036948">
    <property type="entry name" value="Ribosomal_eL21_sf"/>
</dbReference>
<dbReference type="InterPro" id="IPR008991">
    <property type="entry name" value="Translation_prot_SH3-like_sf"/>
</dbReference>
<dbReference type="NCBIfam" id="NF003303">
    <property type="entry name" value="PRK04306.1"/>
    <property type="match status" value="1"/>
</dbReference>
<dbReference type="PANTHER" id="PTHR20981">
    <property type="entry name" value="60S RIBOSOMAL PROTEIN L21"/>
    <property type="match status" value="1"/>
</dbReference>
<dbReference type="Pfam" id="PF01157">
    <property type="entry name" value="Ribosomal_L21e"/>
    <property type="match status" value="1"/>
</dbReference>
<dbReference type="SUPFAM" id="SSF50104">
    <property type="entry name" value="Translation proteins SH3-like domain"/>
    <property type="match status" value="1"/>
</dbReference>
<dbReference type="PROSITE" id="PS01171">
    <property type="entry name" value="RIBOSOMAL_L21E"/>
    <property type="match status" value="1"/>
</dbReference>
<name>RL21_KORCO</name>
<organism>
    <name type="scientific">Korarchaeum cryptofilum (strain OPF8)</name>
    <dbReference type="NCBI Taxonomy" id="374847"/>
    <lineage>
        <taxon>Archaea</taxon>
        <taxon>Thermoproteota</taxon>
        <taxon>Candidatus Korarchaeia</taxon>
        <taxon>Candidatus Korarchaeales</taxon>
        <taxon>Candidatus Korarchaeaceae</taxon>
        <taxon>Candidatus Korarchaeum</taxon>
    </lineage>
</organism>
<feature type="chain" id="PRO_1000121515" description="Large ribosomal subunit protein eL21">
    <location>
        <begin position="1"/>
        <end position="98"/>
    </location>
</feature>